<dbReference type="EMBL" id="CP000821">
    <property type="protein sequence ID" value="ABV35888.1"/>
    <property type="molecule type" value="Genomic_DNA"/>
</dbReference>
<dbReference type="RefSeq" id="WP_012141624.1">
    <property type="nucleotide sequence ID" value="NC_009831.1"/>
</dbReference>
<dbReference type="SMR" id="A8FSR5"/>
<dbReference type="STRING" id="425104.Ssed_1277"/>
<dbReference type="KEGG" id="sse:Ssed_1277"/>
<dbReference type="eggNOG" id="COG0781">
    <property type="taxonomic scope" value="Bacteria"/>
</dbReference>
<dbReference type="HOGENOM" id="CLU_087843_4_1_6"/>
<dbReference type="OrthoDB" id="9789556at2"/>
<dbReference type="Proteomes" id="UP000002015">
    <property type="component" value="Chromosome"/>
</dbReference>
<dbReference type="GO" id="GO:0005829">
    <property type="term" value="C:cytosol"/>
    <property type="evidence" value="ECO:0007669"/>
    <property type="project" value="TreeGrafter"/>
</dbReference>
<dbReference type="GO" id="GO:0003723">
    <property type="term" value="F:RNA binding"/>
    <property type="evidence" value="ECO:0007669"/>
    <property type="project" value="UniProtKB-UniRule"/>
</dbReference>
<dbReference type="GO" id="GO:0006353">
    <property type="term" value="P:DNA-templated transcription termination"/>
    <property type="evidence" value="ECO:0007669"/>
    <property type="project" value="UniProtKB-UniRule"/>
</dbReference>
<dbReference type="GO" id="GO:0031564">
    <property type="term" value="P:transcription antitermination"/>
    <property type="evidence" value="ECO:0007669"/>
    <property type="project" value="UniProtKB-KW"/>
</dbReference>
<dbReference type="CDD" id="cd00619">
    <property type="entry name" value="Terminator_NusB"/>
    <property type="match status" value="1"/>
</dbReference>
<dbReference type="FunFam" id="1.10.940.10:FF:000001">
    <property type="entry name" value="Transcription antitermination factor NusB"/>
    <property type="match status" value="1"/>
</dbReference>
<dbReference type="Gene3D" id="1.10.940.10">
    <property type="entry name" value="NusB-like"/>
    <property type="match status" value="1"/>
</dbReference>
<dbReference type="HAMAP" id="MF_00073">
    <property type="entry name" value="NusB"/>
    <property type="match status" value="1"/>
</dbReference>
<dbReference type="InterPro" id="IPR035926">
    <property type="entry name" value="NusB-like_sf"/>
</dbReference>
<dbReference type="InterPro" id="IPR011605">
    <property type="entry name" value="NusB_fam"/>
</dbReference>
<dbReference type="InterPro" id="IPR006027">
    <property type="entry name" value="NusB_RsmB_TIM44"/>
</dbReference>
<dbReference type="NCBIfam" id="TIGR01951">
    <property type="entry name" value="nusB"/>
    <property type="match status" value="1"/>
</dbReference>
<dbReference type="PANTHER" id="PTHR11078:SF3">
    <property type="entry name" value="ANTITERMINATION NUSB DOMAIN-CONTAINING PROTEIN"/>
    <property type="match status" value="1"/>
</dbReference>
<dbReference type="PANTHER" id="PTHR11078">
    <property type="entry name" value="N UTILIZATION SUBSTANCE PROTEIN B-RELATED"/>
    <property type="match status" value="1"/>
</dbReference>
<dbReference type="Pfam" id="PF01029">
    <property type="entry name" value="NusB"/>
    <property type="match status" value="1"/>
</dbReference>
<dbReference type="SUPFAM" id="SSF48013">
    <property type="entry name" value="NusB-like"/>
    <property type="match status" value="1"/>
</dbReference>
<sequence>MKPSERRKARRLAVQAIYSWQLSGNNIADVEHEFLTEQKIDGIDVAYFRELLSGTATKQAQIDEQIIPHIERPYNEVSPIEKAVLRLATYELTFRKDVPYKVAINEAIELAKAFGAEDGHKFVNGILDKIVGRK</sequence>
<name>NUSB_SHESH</name>
<feature type="chain" id="PRO_1000075206" description="Transcription antitermination protein NusB">
    <location>
        <begin position="1"/>
        <end position="134"/>
    </location>
</feature>
<evidence type="ECO:0000255" key="1">
    <source>
        <dbReference type="HAMAP-Rule" id="MF_00073"/>
    </source>
</evidence>
<keyword id="KW-1185">Reference proteome</keyword>
<keyword id="KW-0694">RNA-binding</keyword>
<keyword id="KW-0804">Transcription</keyword>
<keyword id="KW-0889">Transcription antitermination</keyword>
<keyword id="KW-0805">Transcription regulation</keyword>
<gene>
    <name evidence="1" type="primary">nusB</name>
    <name type="ordered locus">Ssed_1277</name>
</gene>
<comment type="function">
    <text evidence="1">Involved in transcription antitermination. Required for transcription of ribosomal RNA (rRNA) genes. Binds specifically to the boxA antiterminator sequence of the ribosomal RNA (rrn) operons.</text>
</comment>
<comment type="similarity">
    <text evidence="1">Belongs to the NusB family.</text>
</comment>
<proteinExistence type="inferred from homology"/>
<protein>
    <recommendedName>
        <fullName evidence="1">Transcription antitermination protein NusB</fullName>
    </recommendedName>
    <alternativeName>
        <fullName evidence="1">Antitermination factor NusB</fullName>
    </alternativeName>
</protein>
<organism>
    <name type="scientific">Shewanella sediminis (strain HAW-EB3)</name>
    <dbReference type="NCBI Taxonomy" id="425104"/>
    <lineage>
        <taxon>Bacteria</taxon>
        <taxon>Pseudomonadati</taxon>
        <taxon>Pseudomonadota</taxon>
        <taxon>Gammaproteobacteria</taxon>
        <taxon>Alteromonadales</taxon>
        <taxon>Shewanellaceae</taxon>
        <taxon>Shewanella</taxon>
    </lineage>
</organism>
<accession>A8FSR5</accession>
<reference key="1">
    <citation type="submission" date="2007-08" db="EMBL/GenBank/DDBJ databases">
        <title>Complete sequence of Shewanella sediminis HAW-EB3.</title>
        <authorList>
            <consortium name="US DOE Joint Genome Institute"/>
            <person name="Copeland A."/>
            <person name="Lucas S."/>
            <person name="Lapidus A."/>
            <person name="Barry K."/>
            <person name="Glavina del Rio T."/>
            <person name="Dalin E."/>
            <person name="Tice H."/>
            <person name="Pitluck S."/>
            <person name="Chertkov O."/>
            <person name="Brettin T."/>
            <person name="Bruce D."/>
            <person name="Detter J.C."/>
            <person name="Han C."/>
            <person name="Schmutz J."/>
            <person name="Larimer F."/>
            <person name="Land M."/>
            <person name="Hauser L."/>
            <person name="Kyrpides N."/>
            <person name="Kim E."/>
            <person name="Zhao J.-S."/>
            <person name="Richardson P."/>
        </authorList>
    </citation>
    <scope>NUCLEOTIDE SEQUENCE [LARGE SCALE GENOMIC DNA]</scope>
    <source>
        <strain>HAW-EB3</strain>
    </source>
</reference>